<evidence type="ECO:0000255" key="1"/>
<evidence type="ECO:0000255" key="2">
    <source>
        <dbReference type="PROSITE-ProRule" id="PRU01164"/>
    </source>
</evidence>
<evidence type="ECO:0000305" key="3"/>
<proteinExistence type="inferred from homology"/>
<reference key="1">
    <citation type="journal article" date="2005" name="Nature">
        <title>The genome of the social amoeba Dictyostelium discoideum.</title>
        <authorList>
            <person name="Eichinger L."/>
            <person name="Pachebat J.A."/>
            <person name="Gloeckner G."/>
            <person name="Rajandream M.A."/>
            <person name="Sucgang R."/>
            <person name="Berriman M."/>
            <person name="Song J."/>
            <person name="Olsen R."/>
            <person name="Szafranski K."/>
            <person name="Xu Q."/>
            <person name="Tunggal B."/>
            <person name="Kummerfeld S."/>
            <person name="Madera M."/>
            <person name="Konfortov B.A."/>
            <person name="Rivero F."/>
            <person name="Bankier A.T."/>
            <person name="Lehmann R."/>
            <person name="Hamlin N."/>
            <person name="Davies R."/>
            <person name="Gaudet P."/>
            <person name="Fey P."/>
            <person name="Pilcher K."/>
            <person name="Chen G."/>
            <person name="Saunders D."/>
            <person name="Sodergren E.J."/>
            <person name="Davis P."/>
            <person name="Kerhornou A."/>
            <person name="Nie X."/>
            <person name="Hall N."/>
            <person name="Anjard C."/>
            <person name="Hemphill L."/>
            <person name="Bason N."/>
            <person name="Farbrother P."/>
            <person name="Desany B."/>
            <person name="Just E."/>
            <person name="Morio T."/>
            <person name="Rost R."/>
            <person name="Churcher C.M."/>
            <person name="Cooper J."/>
            <person name="Haydock S."/>
            <person name="van Driessche N."/>
            <person name="Cronin A."/>
            <person name="Goodhead I."/>
            <person name="Muzny D.M."/>
            <person name="Mourier T."/>
            <person name="Pain A."/>
            <person name="Lu M."/>
            <person name="Harper D."/>
            <person name="Lindsay R."/>
            <person name="Hauser H."/>
            <person name="James K.D."/>
            <person name="Quiles M."/>
            <person name="Madan Babu M."/>
            <person name="Saito T."/>
            <person name="Buchrieser C."/>
            <person name="Wardroper A."/>
            <person name="Felder M."/>
            <person name="Thangavelu M."/>
            <person name="Johnson D."/>
            <person name="Knights A."/>
            <person name="Loulseged H."/>
            <person name="Mungall K.L."/>
            <person name="Oliver K."/>
            <person name="Price C."/>
            <person name="Quail M.A."/>
            <person name="Urushihara H."/>
            <person name="Hernandez J."/>
            <person name="Rabbinowitsch E."/>
            <person name="Steffen D."/>
            <person name="Sanders M."/>
            <person name="Ma J."/>
            <person name="Kohara Y."/>
            <person name="Sharp S."/>
            <person name="Simmonds M.N."/>
            <person name="Spiegler S."/>
            <person name="Tivey A."/>
            <person name="Sugano S."/>
            <person name="White B."/>
            <person name="Walker D."/>
            <person name="Woodward J.R."/>
            <person name="Winckler T."/>
            <person name="Tanaka Y."/>
            <person name="Shaulsky G."/>
            <person name="Schleicher M."/>
            <person name="Weinstock G.M."/>
            <person name="Rosenthal A."/>
            <person name="Cox E.C."/>
            <person name="Chisholm R.L."/>
            <person name="Gibbs R.A."/>
            <person name="Loomis W.F."/>
            <person name="Platzer M."/>
            <person name="Kay R.R."/>
            <person name="Williams J.G."/>
            <person name="Dear P.H."/>
            <person name="Noegel A.A."/>
            <person name="Barrell B.G."/>
            <person name="Kuspa A."/>
        </authorList>
    </citation>
    <scope>NUCLEOTIDE SEQUENCE [LARGE SCALE GENOMIC DNA]</scope>
    <source>
        <strain>AX4</strain>
    </source>
</reference>
<gene>
    <name type="primary">psiQ</name>
    <name type="ORF">DDB_G0293288</name>
</gene>
<dbReference type="EMBL" id="AAFI02000200">
    <property type="protein sequence ID" value="EAL60843.1"/>
    <property type="molecule type" value="Genomic_DNA"/>
</dbReference>
<dbReference type="RefSeq" id="XP_629234.1">
    <property type="nucleotide sequence ID" value="XM_629232.1"/>
</dbReference>
<dbReference type="FunCoup" id="Q54C32">
    <property type="interactions" value="12"/>
</dbReference>
<dbReference type="GlyCosmos" id="Q54C32">
    <property type="glycosylation" value="15 sites, No reported glycans"/>
</dbReference>
<dbReference type="GlyGen" id="Q54C32">
    <property type="glycosylation" value="15 sites"/>
</dbReference>
<dbReference type="PaxDb" id="44689-DDB0231520"/>
<dbReference type="EnsemblProtists" id="EAL60843">
    <property type="protein sequence ID" value="EAL60843"/>
    <property type="gene ID" value="DDB_G0293288"/>
</dbReference>
<dbReference type="GeneID" id="8629116"/>
<dbReference type="KEGG" id="ddi:DDB_G0293288"/>
<dbReference type="dictyBase" id="DDB_G0293288">
    <property type="gene designation" value="psiQ"/>
</dbReference>
<dbReference type="VEuPathDB" id="AmoebaDB:DDB_G0293288"/>
<dbReference type="eggNOG" id="ENOG502STKH">
    <property type="taxonomic scope" value="Eukaryota"/>
</dbReference>
<dbReference type="HOGENOM" id="CLU_302771_0_0_1"/>
<dbReference type="InParanoid" id="Q54C32"/>
<dbReference type="OMA" id="NICTWNP"/>
<dbReference type="PhylomeDB" id="Q54C32"/>
<dbReference type="PRO" id="PR:Q54C32"/>
<dbReference type="Proteomes" id="UP000002195">
    <property type="component" value="Chromosome 6"/>
</dbReference>
<dbReference type="GO" id="GO:0005576">
    <property type="term" value="C:extracellular region"/>
    <property type="evidence" value="ECO:0000318"/>
    <property type="project" value="GO_Central"/>
</dbReference>
<dbReference type="InterPro" id="IPR011874">
    <property type="entry name" value="Fibro_Slime"/>
</dbReference>
<dbReference type="InterPro" id="IPR037524">
    <property type="entry name" value="PA14/GLEYA"/>
</dbReference>
<dbReference type="InterPro" id="IPR011658">
    <property type="entry name" value="PA14_dom"/>
</dbReference>
<dbReference type="InterPro" id="IPR051154">
    <property type="entry name" value="Prespore-cell_inducing_factor"/>
</dbReference>
<dbReference type="InterPro" id="IPR001673">
    <property type="entry name" value="S_mold_repeat"/>
</dbReference>
<dbReference type="NCBIfam" id="TIGR02148">
    <property type="entry name" value="Fibro_Slime"/>
    <property type="match status" value="1"/>
</dbReference>
<dbReference type="PANTHER" id="PTHR31137:SF9">
    <property type="entry name" value="PA14 DOMAIN-CONTAINING PROTEIN"/>
    <property type="match status" value="1"/>
</dbReference>
<dbReference type="PANTHER" id="PTHR31137">
    <property type="entry name" value="PROTEIN PSIB-RELATED-RELATED"/>
    <property type="match status" value="1"/>
</dbReference>
<dbReference type="Pfam" id="PF00526">
    <property type="entry name" value="Dicty_CTDC"/>
    <property type="match status" value="4"/>
</dbReference>
<dbReference type="Pfam" id="PF07691">
    <property type="entry name" value="PA14"/>
    <property type="match status" value="1"/>
</dbReference>
<dbReference type="SMART" id="SM00758">
    <property type="entry name" value="PA14"/>
    <property type="match status" value="1"/>
</dbReference>
<dbReference type="PROSITE" id="PS51820">
    <property type="entry name" value="PA14"/>
    <property type="match status" value="1"/>
</dbReference>
<keyword id="KW-0325">Glycoprotein</keyword>
<keyword id="KW-1185">Reference proteome</keyword>
<keyword id="KW-0964">Secreted</keyword>
<keyword id="KW-0732">Signal</keyword>
<name>PSIQ_DICDI</name>
<feature type="signal peptide" evidence="1">
    <location>
        <begin position="1"/>
        <end position="20"/>
    </location>
</feature>
<feature type="chain" id="PRO_0000327553" description="Protein psiQ">
    <location>
        <begin position="21"/>
        <end position="985"/>
    </location>
</feature>
<feature type="domain" description="PA14" evidence="2">
    <location>
        <begin position="102"/>
        <end position="247"/>
    </location>
</feature>
<feature type="glycosylation site" description="N-linked (GlcNAc...) asparagine" evidence="1">
    <location>
        <position position="127"/>
    </location>
</feature>
<feature type="glycosylation site" description="N-linked (GlcNAc...) asparagine" evidence="1">
    <location>
        <position position="309"/>
    </location>
</feature>
<feature type="glycosylation site" description="N-linked (GlcNAc...) asparagine" evidence="1">
    <location>
        <position position="424"/>
    </location>
</feature>
<feature type="glycosylation site" description="N-linked (GlcNAc...) asparagine" evidence="1">
    <location>
        <position position="491"/>
    </location>
</feature>
<feature type="glycosylation site" description="N-linked (GlcNAc...) asparagine" evidence="1">
    <location>
        <position position="517"/>
    </location>
</feature>
<feature type="glycosylation site" description="N-linked (GlcNAc...) asparagine" evidence="1">
    <location>
        <position position="527"/>
    </location>
</feature>
<feature type="glycosylation site" description="N-linked (GlcNAc...) asparagine" evidence="1">
    <location>
        <position position="592"/>
    </location>
</feature>
<feature type="glycosylation site" description="N-linked (GlcNAc...) asparagine" evidence="1">
    <location>
        <position position="620"/>
    </location>
</feature>
<feature type="glycosylation site" description="N-linked (GlcNAc...) asparagine" evidence="1">
    <location>
        <position position="649"/>
    </location>
</feature>
<feature type="glycosylation site" description="N-linked (GlcNAc...) asparagine" evidence="1">
    <location>
        <position position="696"/>
    </location>
</feature>
<feature type="glycosylation site" description="N-linked (GlcNAc...) asparagine" evidence="1">
    <location>
        <position position="735"/>
    </location>
</feature>
<feature type="glycosylation site" description="N-linked (GlcNAc...) asparagine" evidence="1">
    <location>
        <position position="767"/>
    </location>
</feature>
<feature type="glycosylation site" description="N-linked (GlcNAc...) asparagine" evidence="1">
    <location>
        <position position="786"/>
    </location>
</feature>
<feature type="glycosylation site" description="N-linked (GlcNAc...) asparagine" evidence="1">
    <location>
        <position position="824"/>
    </location>
</feature>
<feature type="glycosylation site" description="N-linked (GlcNAc...) asparagine" evidence="1">
    <location>
        <position position="842"/>
    </location>
</feature>
<comment type="subcellular location">
    <subcellularLocation>
        <location evidence="3">Secreted</location>
    </subcellularLocation>
</comment>
<comment type="similarity">
    <text evidence="3">Belongs to the prespore-cell-inducing factor family.</text>
</comment>
<protein>
    <recommendedName>
        <fullName>Protein psiQ</fullName>
    </recommendedName>
</protein>
<sequence length="985" mass="107196">MMKYIYILLIFSLLFLKINSQNTILLNALIYDQTPSRNNDFQIPSPGGIAKGLVKSNLGSDNTPVLVAERSSTIHSPETFNQWFHNYPGVNLPINYQITLTQSTTNPNVYAYTNDAFFPIDGQGFDNKTNYPYEAVYRDERGTPHNFHFCLQIHSMFAYKKGDTFYFNGDDDVWVFMNKILVVDLGGIHGKATTSINLDRLGLTEGTNYPFDFFYCERHTTESHISIETSIELTCPGYDECGVCQGDGSSCCTKSNCNDNPNNKLNCITAQCSNNVCVKSAPSCPSINPCEAGTCIPNFGCSYSEITCNRTNCENSFCNKDTNTCERSPIANCVSCSNGPCITTDLCFPQKCDSKGNCVSSNKNCDDRDYCTTDTCQDGICIHTPIPKCVNCAGTGCITTNDCNPKVCAPDGKSCLTEVLCNDNKTCTKDFCFAGHCLFIPIDCDDVDDCTVDTCDETLGCVHTPLDNCIACTGLACITTDLCNQKLCTDNGTKCTEVPKVCDDGNACSNDRCISPNGTCAHEILQNCTDCGTFNCITLDLCSPLSCPTDGSTTCVSIPKTCNDNKPCTLNQCHSPDGICTAVPIENCVKCNQTNRGCLTVDFCNPVECSENGDSCIITNRTCNDYNYCTTDSCINGQCYNEIIQNCENCTNGIGCTTTDFCFQQICSDSGDTCKTVPLDCNDGLSCTTETCLGPNGTCTHTIIKNCIECGIEPCITENLCLPVVCGPDGSCLYNYTESTCDDNDACTSDVCTEYGCEHYTYTGCMNCTNGGCFTTPDTCNHYGCNFTGDGKCFFTHLECDDNDPCTKDHCLYSGDCYYEKLTNCTTPTPTQTPPPTQTPTNHSIGVNECDCCPEGQYCLLIFGHERCFIANDGGDGIPEETIGCPGVTTGTPTSTDGGTGHYTESGTGNPHLCDRHHCRSGMECHVINGIPECLPSKYKCLDCLDLHCEKQGGKTCFTIENQNYKPNIKGCKDDSCCKYTPTCR</sequence>
<organism>
    <name type="scientific">Dictyostelium discoideum</name>
    <name type="common">Social amoeba</name>
    <dbReference type="NCBI Taxonomy" id="44689"/>
    <lineage>
        <taxon>Eukaryota</taxon>
        <taxon>Amoebozoa</taxon>
        <taxon>Evosea</taxon>
        <taxon>Eumycetozoa</taxon>
        <taxon>Dictyostelia</taxon>
        <taxon>Dictyosteliales</taxon>
        <taxon>Dictyosteliaceae</taxon>
        <taxon>Dictyostelium</taxon>
    </lineage>
</organism>
<accession>Q54C32</accession>